<evidence type="ECO:0000255" key="1">
    <source>
        <dbReference type="HAMAP-Rule" id="MF_03152"/>
    </source>
</evidence>
<evidence type="ECO:0000256" key="2">
    <source>
        <dbReference type="SAM" id="MobiDB-lite"/>
    </source>
</evidence>
<evidence type="ECO:0000305" key="3"/>
<organism>
    <name type="scientific">Emericella nidulans (strain FGSC A4 / ATCC 38163 / CBS 112.46 / NRRL 194 / M139)</name>
    <name type="common">Aspergillus nidulans</name>
    <dbReference type="NCBI Taxonomy" id="227321"/>
    <lineage>
        <taxon>Eukaryota</taxon>
        <taxon>Fungi</taxon>
        <taxon>Dikarya</taxon>
        <taxon>Ascomycota</taxon>
        <taxon>Pezizomycotina</taxon>
        <taxon>Eurotiomycetes</taxon>
        <taxon>Eurotiomycetidae</taxon>
        <taxon>Eurotiales</taxon>
        <taxon>Aspergillaceae</taxon>
        <taxon>Aspergillus</taxon>
        <taxon>Aspergillus subgen. Nidulantes</taxon>
    </lineage>
</organism>
<reference key="1">
    <citation type="journal article" date="2005" name="Nature">
        <title>Sequencing of Aspergillus nidulans and comparative analysis with A. fumigatus and A. oryzae.</title>
        <authorList>
            <person name="Galagan J.E."/>
            <person name="Calvo S.E."/>
            <person name="Cuomo C."/>
            <person name="Ma L.-J."/>
            <person name="Wortman J.R."/>
            <person name="Batzoglou S."/>
            <person name="Lee S.-I."/>
            <person name="Bastuerkmen M."/>
            <person name="Spevak C.C."/>
            <person name="Clutterbuck J."/>
            <person name="Kapitonov V."/>
            <person name="Jurka J."/>
            <person name="Scazzocchio C."/>
            <person name="Farman M.L."/>
            <person name="Butler J."/>
            <person name="Purcell S."/>
            <person name="Harris S."/>
            <person name="Braus G.H."/>
            <person name="Draht O."/>
            <person name="Busch S."/>
            <person name="D'Enfert C."/>
            <person name="Bouchier C."/>
            <person name="Goldman G.H."/>
            <person name="Bell-Pedersen D."/>
            <person name="Griffiths-Jones S."/>
            <person name="Doonan J.H."/>
            <person name="Yu J."/>
            <person name="Vienken K."/>
            <person name="Pain A."/>
            <person name="Freitag M."/>
            <person name="Selker E.U."/>
            <person name="Archer D.B."/>
            <person name="Penalva M.A."/>
            <person name="Oakley B.R."/>
            <person name="Momany M."/>
            <person name="Tanaka T."/>
            <person name="Kumagai T."/>
            <person name="Asai K."/>
            <person name="Machida M."/>
            <person name="Nierman W.C."/>
            <person name="Denning D.W."/>
            <person name="Caddick M.X."/>
            <person name="Hynes M."/>
            <person name="Paoletti M."/>
            <person name="Fischer R."/>
            <person name="Miller B.L."/>
            <person name="Dyer P.S."/>
            <person name="Sachs M.S."/>
            <person name="Osmani S.A."/>
            <person name="Birren B.W."/>
        </authorList>
    </citation>
    <scope>NUCLEOTIDE SEQUENCE [LARGE SCALE GENOMIC DNA]</scope>
    <source>
        <strain>FGSC A4 / ATCC 38163 / CBS 112.46 / NRRL 194 / M139</strain>
    </source>
</reference>
<reference key="2">
    <citation type="journal article" date="2009" name="Fungal Genet. Biol.">
        <title>The 2008 update of the Aspergillus nidulans genome annotation: a community effort.</title>
        <authorList>
            <person name="Wortman J.R."/>
            <person name="Gilsenan J.M."/>
            <person name="Joardar V."/>
            <person name="Deegan J."/>
            <person name="Clutterbuck J."/>
            <person name="Andersen M.R."/>
            <person name="Archer D."/>
            <person name="Bencina M."/>
            <person name="Braus G."/>
            <person name="Coutinho P."/>
            <person name="von Dohren H."/>
            <person name="Doonan J."/>
            <person name="Driessen A.J."/>
            <person name="Durek P."/>
            <person name="Espeso E."/>
            <person name="Fekete E."/>
            <person name="Flipphi M."/>
            <person name="Estrada C.G."/>
            <person name="Geysens S."/>
            <person name="Goldman G."/>
            <person name="de Groot P.W."/>
            <person name="Hansen K."/>
            <person name="Harris S.D."/>
            <person name="Heinekamp T."/>
            <person name="Helmstaedt K."/>
            <person name="Henrissat B."/>
            <person name="Hofmann G."/>
            <person name="Homan T."/>
            <person name="Horio T."/>
            <person name="Horiuchi H."/>
            <person name="James S."/>
            <person name="Jones M."/>
            <person name="Karaffa L."/>
            <person name="Karanyi Z."/>
            <person name="Kato M."/>
            <person name="Keller N."/>
            <person name="Kelly D.E."/>
            <person name="Kiel J.A."/>
            <person name="Kim J.M."/>
            <person name="van der Klei I.J."/>
            <person name="Klis F.M."/>
            <person name="Kovalchuk A."/>
            <person name="Krasevec N."/>
            <person name="Kubicek C.P."/>
            <person name="Liu B."/>
            <person name="Maccabe A."/>
            <person name="Meyer V."/>
            <person name="Mirabito P."/>
            <person name="Miskei M."/>
            <person name="Mos M."/>
            <person name="Mullins J."/>
            <person name="Nelson D.R."/>
            <person name="Nielsen J."/>
            <person name="Oakley B.R."/>
            <person name="Osmani S.A."/>
            <person name="Pakula T."/>
            <person name="Paszewski A."/>
            <person name="Paulsen I."/>
            <person name="Pilsyk S."/>
            <person name="Pocsi I."/>
            <person name="Punt P.J."/>
            <person name="Ram A.F."/>
            <person name="Ren Q."/>
            <person name="Robellet X."/>
            <person name="Robson G."/>
            <person name="Seiboth B."/>
            <person name="van Solingen P."/>
            <person name="Specht T."/>
            <person name="Sun J."/>
            <person name="Taheri-Talesh N."/>
            <person name="Takeshita N."/>
            <person name="Ussery D."/>
            <person name="vanKuyk P.A."/>
            <person name="Visser H."/>
            <person name="van de Vondervoort P.J."/>
            <person name="de Vries R.P."/>
            <person name="Walton J."/>
            <person name="Xiang X."/>
            <person name="Xiong Y."/>
            <person name="Zeng A.P."/>
            <person name="Brandt B.W."/>
            <person name="Cornell M.J."/>
            <person name="van den Hondel C.A."/>
            <person name="Visser J."/>
            <person name="Oliver S.G."/>
            <person name="Turner G."/>
        </authorList>
    </citation>
    <scope>GENOME REANNOTATION</scope>
    <source>
        <strain>FGSC A4 / ATCC 38163 / CBS 112.46 / NRRL 194 / M139</strain>
    </source>
</reference>
<protein>
    <recommendedName>
        <fullName evidence="1">tRNA (guanine(37)-N(1))-methyltransferase</fullName>
        <ecNumber evidence="1">2.1.1.228</ecNumber>
    </recommendedName>
    <alternativeName>
        <fullName evidence="1">M1G-methyltransferase</fullName>
    </alternativeName>
    <alternativeName>
        <fullName evidence="1">tRNA [GM37] methyltransferase</fullName>
    </alternativeName>
    <alternativeName>
        <fullName evidence="1">tRNA methyltransferase 5</fullName>
    </alternativeName>
</protein>
<sequence length="478" mass="55054">MAQSTEDNTRRPRPSDLPEMFRPPVNRAMRVLDRSFFKKTVPLSAATIFKNSDISRVRRALEQSKDILALPRLNTIQDIKQDDVVKKCLLLKETIRHDDTATWSPTINELVDNGVVGVGPFDLTLDYDYWLHSDIISAVLPEELLEEVPQGFTQVGHVAQLNLREQFIPWRHLIAQVLLDKNPTLRTVIRKTEDVGSQSEFRTFPYELLAGDSDMNVIQHEQDCEFRFDFSRVYWNSRLHTEHQRLVDLFKPGEMVCDVMAGVGPFAIPAGKKKIFVWANDLNPHGYEVMQDAVKRNKVFKFVTPFNQDGRSFIRWSARALQKYDPVTVTIQPRTKRTRDASGQVKETQPPLEVYTRPKVFHHYVMNLPGNALEFLDAFIGVYAGCEELFEPHTKEQLPMVHVYCFSGHSENEVDDHIDICKRMSERLEYPITVEDRVGGAGNTELELSIHNVRLVSPNKQMFCASFRLPRAVAFRKK</sequence>
<comment type="function">
    <text evidence="1">Specifically methylates the N1 position of guanosine-37 in various cytoplasmic and mitochondrial tRNAs. Methylation is not dependent on the nature of the nucleoside 5' of the target nucleoside. This is the first step in the biosynthesis of wybutosine (yW), a modified base adjacent to the anticodon of tRNAs and required for accurate decoding.</text>
</comment>
<comment type="catalytic activity">
    <reaction evidence="1">
        <text>guanosine(37) in tRNA + S-adenosyl-L-methionine = N(1)-methylguanosine(37) in tRNA + S-adenosyl-L-homocysteine + H(+)</text>
        <dbReference type="Rhea" id="RHEA:36899"/>
        <dbReference type="Rhea" id="RHEA-COMP:10145"/>
        <dbReference type="Rhea" id="RHEA-COMP:10147"/>
        <dbReference type="ChEBI" id="CHEBI:15378"/>
        <dbReference type="ChEBI" id="CHEBI:57856"/>
        <dbReference type="ChEBI" id="CHEBI:59789"/>
        <dbReference type="ChEBI" id="CHEBI:73542"/>
        <dbReference type="ChEBI" id="CHEBI:74269"/>
        <dbReference type="EC" id="2.1.1.228"/>
    </reaction>
</comment>
<comment type="subunit">
    <text evidence="1">Monomer.</text>
</comment>
<comment type="subcellular location">
    <subcellularLocation>
        <location evidence="1">Mitochondrion matrix</location>
    </subcellularLocation>
    <subcellularLocation>
        <location evidence="1">Nucleus</location>
    </subcellularLocation>
    <subcellularLocation>
        <location evidence="1">Cytoplasm</location>
    </subcellularLocation>
    <text evidence="1">Predominantly in the mitochondria and in the nucleus.</text>
</comment>
<comment type="similarity">
    <text evidence="3">Belongs to the class I-like SAM-binding methyltransferase superfamily. TRM5/TYW2 family.</text>
</comment>
<comment type="sequence caution" evidence="3">
    <conflict type="erroneous gene model prediction">
        <sequence resource="EMBL-CDS" id="EAA63516"/>
    </conflict>
    <text>The predicted gene AN2945 has been split into 4 genes: AN10350, AN10360, AN10361 and AN10362.</text>
</comment>
<name>TRM5_EMENI</name>
<dbReference type="EC" id="2.1.1.228" evidence="1"/>
<dbReference type="EMBL" id="AACD01000051">
    <property type="protein sequence ID" value="EAA63516.1"/>
    <property type="status" value="ALT_SEQ"/>
    <property type="molecule type" value="Genomic_DNA"/>
</dbReference>
<dbReference type="EMBL" id="BN001306">
    <property type="protein sequence ID" value="CBF83699.1"/>
    <property type="molecule type" value="Genomic_DNA"/>
</dbReference>
<dbReference type="RefSeq" id="XP_660549.1">
    <property type="nucleotide sequence ID" value="XM_655457.1"/>
</dbReference>
<dbReference type="SMR" id="C8VJ35"/>
<dbReference type="FunCoup" id="C8VJ35">
    <property type="interactions" value="1080"/>
</dbReference>
<dbReference type="STRING" id="227321.C8VJ35"/>
<dbReference type="EnsemblFungi" id="CBF83699">
    <property type="protein sequence ID" value="CBF83699"/>
    <property type="gene ID" value="ANIA_10361"/>
</dbReference>
<dbReference type="VEuPathDB" id="FungiDB:AN10361"/>
<dbReference type="eggNOG" id="KOG2078">
    <property type="taxonomic scope" value="Eukaryota"/>
</dbReference>
<dbReference type="HOGENOM" id="CLU_001933_0_0_1"/>
<dbReference type="InParanoid" id="C8VJ35"/>
<dbReference type="OMA" id="VGSHSQF"/>
<dbReference type="OrthoDB" id="408788at2759"/>
<dbReference type="Proteomes" id="UP000000560">
    <property type="component" value="Chromosome VI"/>
</dbReference>
<dbReference type="GO" id="GO:0005737">
    <property type="term" value="C:cytoplasm"/>
    <property type="evidence" value="ECO:0000318"/>
    <property type="project" value="GO_Central"/>
</dbReference>
<dbReference type="GO" id="GO:0005759">
    <property type="term" value="C:mitochondrial matrix"/>
    <property type="evidence" value="ECO:0000318"/>
    <property type="project" value="GO_Central"/>
</dbReference>
<dbReference type="GO" id="GO:0005634">
    <property type="term" value="C:nucleus"/>
    <property type="evidence" value="ECO:0007669"/>
    <property type="project" value="UniProtKB-SubCell"/>
</dbReference>
<dbReference type="GO" id="GO:0052906">
    <property type="term" value="F:tRNA (guanine(37)-N1)-methyltransferase activity"/>
    <property type="evidence" value="ECO:0007669"/>
    <property type="project" value="UniProtKB-UniRule"/>
</dbReference>
<dbReference type="GO" id="GO:0008175">
    <property type="term" value="F:tRNA methyltransferase activity"/>
    <property type="evidence" value="ECO:0000318"/>
    <property type="project" value="GO_Central"/>
</dbReference>
<dbReference type="GO" id="GO:0070901">
    <property type="term" value="P:mitochondrial tRNA methylation"/>
    <property type="evidence" value="ECO:0000318"/>
    <property type="project" value="GO_Central"/>
</dbReference>
<dbReference type="GO" id="GO:0002939">
    <property type="term" value="P:tRNA N1-guanine methylation"/>
    <property type="evidence" value="ECO:0000318"/>
    <property type="project" value="GO_Central"/>
</dbReference>
<dbReference type="FunFam" id="3.30.300.110:FF:000001">
    <property type="entry name" value="tRNA (guanine(37)-N1)-methyltransferase"/>
    <property type="match status" value="1"/>
</dbReference>
<dbReference type="Gene3D" id="3.30.300.110">
    <property type="entry name" value="Met-10+ protein-like domains"/>
    <property type="match status" value="1"/>
</dbReference>
<dbReference type="Gene3D" id="3.40.50.150">
    <property type="entry name" value="Vaccinia Virus protein VP39"/>
    <property type="match status" value="1"/>
</dbReference>
<dbReference type="HAMAP" id="MF_03152">
    <property type="entry name" value="TRM5"/>
    <property type="match status" value="1"/>
</dbReference>
<dbReference type="InterPro" id="IPR030382">
    <property type="entry name" value="MeTrfase_TRM5/TYW2"/>
</dbReference>
<dbReference type="InterPro" id="IPR029063">
    <property type="entry name" value="SAM-dependent_MTases_sf"/>
</dbReference>
<dbReference type="InterPro" id="IPR056743">
    <property type="entry name" value="TRM5-TYW2-like_MTfase"/>
</dbReference>
<dbReference type="InterPro" id="IPR056744">
    <property type="entry name" value="TRM5/TYW2-like_N"/>
</dbReference>
<dbReference type="InterPro" id="IPR025792">
    <property type="entry name" value="tRNA_Gua_MeTrfase_euk"/>
</dbReference>
<dbReference type="PANTHER" id="PTHR23245:SF36">
    <property type="entry name" value="TRNA (GUANINE(37)-N1)-METHYLTRANSFERASE"/>
    <property type="match status" value="1"/>
</dbReference>
<dbReference type="PANTHER" id="PTHR23245">
    <property type="entry name" value="TRNA METHYLTRANSFERASE"/>
    <property type="match status" value="1"/>
</dbReference>
<dbReference type="Pfam" id="PF02475">
    <property type="entry name" value="TRM5-TYW2_MTfase"/>
    <property type="match status" value="1"/>
</dbReference>
<dbReference type="Pfam" id="PF25133">
    <property type="entry name" value="TYW2_N_2"/>
    <property type="match status" value="1"/>
</dbReference>
<dbReference type="SUPFAM" id="SSF53335">
    <property type="entry name" value="S-adenosyl-L-methionine-dependent methyltransferases"/>
    <property type="match status" value="1"/>
</dbReference>
<dbReference type="PROSITE" id="PS51684">
    <property type="entry name" value="SAM_MT_TRM5_TYW2"/>
    <property type="match status" value="1"/>
</dbReference>
<feature type="chain" id="PRO_0000414160" description="tRNA (guanine(37)-N(1))-methyltransferase">
    <location>
        <begin position="1"/>
        <end position="478"/>
    </location>
</feature>
<feature type="region of interest" description="Disordered" evidence="2">
    <location>
        <begin position="1"/>
        <end position="22"/>
    </location>
</feature>
<feature type="compositionally biased region" description="Basic and acidic residues" evidence="2">
    <location>
        <begin position="7"/>
        <end position="16"/>
    </location>
</feature>
<feature type="binding site" evidence="1">
    <location>
        <position position="243"/>
    </location>
    <ligand>
        <name>S-adenosyl-L-methionine</name>
        <dbReference type="ChEBI" id="CHEBI:59789"/>
    </ligand>
</feature>
<feature type="binding site" evidence="1">
    <location>
        <begin position="281"/>
        <end position="282"/>
    </location>
    <ligand>
        <name>S-adenosyl-L-methionine</name>
        <dbReference type="ChEBI" id="CHEBI:59789"/>
    </ligand>
</feature>
<feature type="binding site" evidence="1">
    <location>
        <begin position="309"/>
        <end position="310"/>
    </location>
    <ligand>
        <name>S-adenosyl-L-methionine</name>
        <dbReference type="ChEBI" id="CHEBI:59789"/>
    </ligand>
</feature>
<feature type="binding site" evidence="1">
    <location>
        <position position="367"/>
    </location>
    <ligand>
        <name>S-adenosyl-L-methionine</name>
        <dbReference type="ChEBI" id="CHEBI:59789"/>
    </ligand>
</feature>
<gene>
    <name type="primary">trm5</name>
    <name type="ORF">AN10361</name>
</gene>
<accession>C8VJ35</accession>
<accession>Q5B935</accession>
<keyword id="KW-0963">Cytoplasm</keyword>
<keyword id="KW-0489">Methyltransferase</keyword>
<keyword id="KW-0496">Mitochondrion</keyword>
<keyword id="KW-0539">Nucleus</keyword>
<keyword id="KW-1185">Reference proteome</keyword>
<keyword id="KW-0949">S-adenosyl-L-methionine</keyword>
<keyword id="KW-0808">Transferase</keyword>
<keyword id="KW-0819">tRNA processing</keyword>
<proteinExistence type="inferred from homology"/>